<organism>
    <name type="scientific">Salmonella arizonae (strain ATCC BAA-731 / CDC346-86 / RSK2980)</name>
    <dbReference type="NCBI Taxonomy" id="41514"/>
    <lineage>
        <taxon>Bacteria</taxon>
        <taxon>Pseudomonadati</taxon>
        <taxon>Pseudomonadota</taxon>
        <taxon>Gammaproteobacteria</taxon>
        <taxon>Enterobacterales</taxon>
        <taxon>Enterobacteriaceae</taxon>
        <taxon>Salmonella</taxon>
    </lineage>
</organism>
<evidence type="ECO:0000255" key="1">
    <source>
        <dbReference type="HAMAP-Rule" id="MF_01450"/>
    </source>
</evidence>
<proteinExistence type="inferred from homology"/>
<feature type="chain" id="PRO_0000326795" description="Acylphosphatase">
    <location>
        <begin position="1"/>
        <end position="93"/>
    </location>
</feature>
<feature type="domain" description="Acylphosphatase-like" evidence="1">
    <location>
        <begin position="5"/>
        <end position="93"/>
    </location>
</feature>
<feature type="active site" evidence="1">
    <location>
        <position position="20"/>
    </location>
</feature>
<feature type="active site" evidence="1">
    <location>
        <position position="38"/>
    </location>
</feature>
<feature type="disulfide bond" evidence="1">
    <location>
        <begin position="5"/>
        <end position="49"/>
    </location>
</feature>
<accession>A9MHS1</accession>
<sequence>MSNVCTIAWIYGRVQGVGFRYTTQHEAQRLGLTGYAKNMDDGSVEVVACGDEAQVEKLIKWLKEGGPRSARVDKILTEPHSPHETLTDFSIRY</sequence>
<keyword id="KW-1015">Disulfide bond</keyword>
<keyword id="KW-0378">Hydrolase</keyword>
<keyword id="KW-1185">Reference proteome</keyword>
<dbReference type="EC" id="3.6.1.7" evidence="1"/>
<dbReference type="EMBL" id="CP000880">
    <property type="protein sequence ID" value="ABX21811.1"/>
    <property type="molecule type" value="Genomic_DNA"/>
</dbReference>
<dbReference type="SMR" id="A9MHS1"/>
<dbReference type="STRING" id="41514.SARI_01929"/>
<dbReference type="KEGG" id="ses:SARI_01929"/>
<dbReference type="HOGENOM" id="CLU_141932_1_2_6"/>
<dbReference type="Proteomes" id="UP000002084">
    <property type="component" value="Chromosome"/>
</dbReference>
<dbReference type="GO" id="GO:0003998">
    <property type="term" value="F:acylphosphatase activity"/>
    <property type="evidence" value="ECO:0007669"/>
    <property type="project" value="UniProtKB-UniRule"/>
</dbReference>
<dbReference type="FunFam" id="3.30.70.100:FF:000012">
    <property type="entry name" value="Acylphosphatase"/>
    <property type="match status" value="1"/>
</dbReference>
<dbReference type="Gene3D" id="3.30.70.100">
    <property type="match status" value="1"/>
</dbReference>
<dbReference type="HAMAP" id="MF_01450">
    <property type="entry name" value="Acylphosphatase_entero"/>
    <property type="match status" value="1"/>
</dbReference>
<dbReference type="InterPro" id="IPR020456">
    <property type="entry name" value="Acylphosphatase"/>
</dbReference>
<dbReference type="InterPro" id="IPR001792">
    <property type="entry name" value="Acylphosphatase-like_dom"/>
</dbReference>
<dbReference type="InterPro" id="IPR036046">
    <property type="entry name" value="Acylphosphatase-like_dom_sf"/>
</dbReference>
<dbReference type="InterPro" id="IPR028627">
    <property type="entry name" value="Acylphosphatase_bac"/>
</dbReference>
<dbReference type="InterPro" id="IPR017968">
    <property type="entry name" value="Acylphosphatase_CS"/>
</dbReference>
<dbReference type="NCBIfam" id="NF011000">
    <property type="entry name" value="PRK14426.1"/>
    <property type="match status" value="1"/>
</dbReference>
<dbReference type="NCBIfam" id="NF011022">
    <property type="entry name" value="PRK14451.1"/>
    <property type="match status" value="1"/>
</dbReference>
<dbReference type="PANTHER" id="PTHR47268">
    <property type="entry name" value="ACYLPHOSPHATASE"/>
    <property type="match status" value="1"/>
</dbReference>
<dbReference type="PANTHER" id="PTHR47268:SF4">
    <property type="entry name" value="ACYLPHOSPHATASE"/>
    <property type="match status" value="1"/>
</dbReference>
<dbReference type="Pfam" id="PF00708">
    <property type="entry name" value="Acylphosphatase"/>
    <property type="match status" value="1"/>
</dbReference>
<dbReference type="PRINTS" id="PR00112">
    <property type="entry name" value="ACYLPHPHTASE"/>
</dbReference>
<dbReference type="SUPFAM" id="SSF54975">
    <property type="entry name" value="Acylphosphatase/BLUF domain-like"/>
    <property type="match status" value="1"/>
</dbReference>
<dbReference type="PROSITE" id="PS00150">
    <property type="entry name" value="ACYLPHOSPHATASE_1"/>
    <property type="match status" value="1"/>
</dbReference>
<dbReference type="PROSITE" id="PS00151">
    <property type="entry name" value="ACYLPHOSPHATASE_2"/>
    <property type="match status" value="1"/>
</dbReference>
<dbReference type="PROSITE" id="PS51160">
    <property type="entry name" value="ACYLPHOSPHATASE_3"/>
    <property type="match status" value="1"/>
</dbReference>
<gene>
    <name evidence="1" type="primary">yccX</name>
    <name type="ordered locus">SARI_01929</name>
</gene>
<reference key="1">
    <citation type="submission" date="2007-11" db="EMBL/GenBank/DDBJ databases">
        <authorList>
            <consortium name="The Salmonella enterica serovar Arizonae Genome Sequencing Project"/>
            <person name="McClelland M."/>
            <person name="Sanderson E.K."/>
            <person name="Porwollik S."/>
            <person name="Spieth J."/>
            <person name="Clifton W.S."/>
            <person name="Fulton R."/>
            <person name="Chunyan W."/>
            <person name="Wollam A."/>
            <person name="Shah N."/>
            <person name="Pepin K."/>
            <person name="Bhonagiri V."/>
            <person name="Nash W."/>
            <person name="Johnson M."/>
            <person name="Thiruvilangam P."/>
            <person name="Wilson R."/>
        </authorList>
    </citation>
    <scope>NUCLEOTIDE SEQUENCE [LARGE SCALE GENOMIC DNA]</scope>
    <source>
        <strain>ATCC BAA-731 / CDC346-86 / RSK2980</strain>
    </source>
</reference>
<name>ACYP_SALAR</name>
<comment type="catalytic activity">
    <reaction evidence="1">
        <text>an acyl phosphate + H2O = a carboxylate + phosphate + H(+)</text>
        <dbReference type="Rhea" id="RHEA:14965"/>
        <dbReference type="ChEBI" id="CHEBI:15377"/>
        <dbReference type="ChEBI" id="CHEBI:15378"/>
        <dbReference type="ChEBI" id="CHEBI:29067"/>
        <dbReference type="ChEBI" id="CHEBI:43474"/>
        <dbReference type="ChEBI" id="CHEBI:59918"/>
        <dbReference type="EC" id="3.6.1.7"/>
    </reaction>
</comment>
<comment type="similarity">
    <text evidence="1">Belongs to the acylphosphatase family.</text>
</comment>
<protein>
    <recommendedName>
        <fullName evidence="1">Acylphosphatase</fullName>
        <ecNumber evidence="1">3.6.1.7</ecNumber>
    </recommendedName>
    <alternativeName>
        <fullName evidence="1">Acylphosphate phosphohydrolase</fullName>
    </alternativeName>
</protein>